<evidence type="ECO:0000255" key="1">
    <source>
        <dbReference type="HAMAP-Rule" id="MF_01405"/>
    </source>
</evidence>
<keyword id="KW-0378">Hydrolase</keyword>
<keyword id="KW-0460">Magnesium</keyword>
<keyword id="KW-0479">Metal-binding</keyword>
<keyword id="KW-0546">Nucleotide metabolism</keyword>
<keyword id="KW-0547">Nucleotide-binding</keyword>
<keyword id="KW-1185">Reference proteome</keyword>
<sequence length="205" mass="23222">MESMKQVVVATKNMGKVREFAELFERFDLEVKSLHDFPHIEEVEETGETFEENAILKADSLSRQLNAIVIADDSGLIVDALNGKPGVYSARFAGEPKDDQANIDKVLQELNEIPFDKRKARFYCALAVAFPEGDKKPVIVNGTCEGFILEQRRGENGFGYDPIFYVEEYKKAMAELSSDEKNAISHRGRALRKLEEKIPEWFLGE</sequence>
<dbReference type="EC" id="3.6.1.66" evidence="1"/>
<dbReference type="EMBL" id="AE016877">
    <property type="protein sequence ID" value="AAP11404.1"/>
    <property type="molecule type" value="Genomic_DNA"/>
</dbReference>
<dbReference type="RefSeq" id="NP_834203.1">
    <property type="nucleotide sequence ID" value="NC_004722.1"/>
</dbReference>
<dbReference type="SMR" id="Q817P4"/>
<dbReference type="STRING" id="226900.BC_4493"/>
<dbReference type="KEGG" id="bce:BC4493"/>
<dbReference type="PATRIC" id="fig|226900.8.peg.4646"/>
<dbReference type="HOGENOM" id="CLU_082080_0_2_9"/>
<dbReference type="Proteomes" id="UP000001417">
    <property type="component" value="Chromosome"/>
</dbReference>
<dbReference type="GO" id="GO:0005737">
    <property type="term" value="C:cytoplasm"/>
    <property type="evidence" value="ECO:0000318"/>
    <property type="project" value="GO_Central"/>
</dbReference>
<dbReference type="GO" id="GO:0005829">
    <property type="term" value="C:cytosol"/>
    <property type="evidence" value="ECO:0000318"/>
    <property type="project" value="GO_Central"/>
</dbReference>
<dbReference type="GO" id="GO:0035870">
    <property type="term" value="F:dITP diphosphatase activity"/>
    <property type="evidence" value="ECO:0007669"/>
    <property type="project" value="RHEA"/>
</dbReference>
<dbReference type="GO" id="GO:0036220">
    <property type="term" value="F:ITP diphosphatase activity"/>
    <property type="evidence" value="ECO:0007669"/>
    <property type="project" value="UniProtKB-EC"/>
</dbReference>
<dbReference type="GO" id="GO:0046872">
    <property type="term" value="F:metal ion binding"/>
    <property type="evidence" value="ECO:0007669"/>
    <property type="project" value="UniProtKB-KW"/>
</dbReference>
<dbReference type="GO" id="GO:0047429">
    <property type="term" value="F:nucleoside triphosphate diphosphatase activity"/>
    <property type="evidence" value="ECO:0000318"/>
    <property type="project" value="GO_Central"/>
</dbReference>
<dbReference type="GO" id="GO:0000166">
    <property type="term" value="F:nucleotide binding"/>
    <property type="evidence" value="ECO:0007669"/>
    <property type="project" value="UniProtKB-KW"/>
</dbReference>
<dbReference type="GO" id="GO:0017111">
    <property type="term" value="F:ribonucleoside triphosphate phosphatase activity"/>
    <property type="evidence" value="ECO:0007669"/>
    <property type="project" value="InterPro"/>
</dbReference>
<dbReference type="GO" id="GO:0036222">
    <property type="term" value="F:XTP diphosphatase activity"/>
    <property type="evidence" value="ECO:0007669"/>
    <property type="project" value="RHEA"/>
</dbReference>
<dbReference type="GO" id="GO:0009143">
    <property type="term" value="P:nucleoside triphosphate catabolic process"/>
    <property type="evidence" value="ECO:0000318"/>
    <property type="project" value="GO_Central"/>
</dbReference>
<dbReference type="GO" id="GO:0009117">
    <property type="term" value="P:nucleotide metabolic process"/>
    <property type="evidence" value="ECO:0007669"/>
    <property type="project" value="UniProtKB-KW"/>
</dbReference>
<dbReference type="GO" id="GO:0009146">
    <property type="term" value="P:purine nucleoside triphosphate catabolic process"/>
    <property type="evidence" value="ECO:0007669"/>
    <property type="project" value="UniProtKB-UniRule"/>
</dbReference>
<dbReference type="CDD" id="cd00515">
    <property type="entry name" value="HAM1"/>
    <property type="match status" value="1"/>
</dbReference>
<dbReference type="FunFam" id="3.90.950.10:FF:000001">
    <property type="entry name" value="dITP/XTP pyrophosphatase"/>
    <property type="match status" value="1"/>
</dbReference>
<dbReference type="Gene3D" id="3.90.950.10">
    <property type="match status" value="1"/>
</dbReference>
<dbReference type="HAMAP" id="MF_01405">
    <property type="entry name" value="Non_canon_purine_NTPase"/>
    <property type="match status" value="1"/>
</dbReference>
<dbReference type="InterPro" id="IPR020922">
    <property type="entry name" value="dITP/XTP_pyrophosphatase"/>
</dbReference>
<dbReference type="InterPro" id="IPR029001">
    <property type="entry name" value="ITPase-like_fam"/>
</dbReference>
<dbReference type="InterPro" id="IPR002637">
    <property type="entry name" value="RdgB/HAM1"/>
</dbReference>
<dbReference type="NCBIfam" id="NF011397">
    <property type="entry name" value="PRK14822.1"/>
    <property type="match status" value="1"/>
</dbReference>
<dbReference type="NCBIfam" id="TIGR00042">
    <property type="entry name" value="RdgB/HAM1 family non-canonical purine NTP pyrophosphatase"/>
    <property type="match status" value="1"/>
</dbReference>
<dbReference type="PANTHER" id="PTHR11067:SF9">
    <property type="entry name" value="INOSINE TRIPHOSPHATE PYROPHOSPHATASE"/>
    <property type="match status" value="1"/>
</dbReference>
<dbReference type="PANTHER" id="PTHR11067">
    <property type="entry name" value="INOSINE TRIPHOSPHATE PYROPHOSPHATASE/HAM1 PROTEIN"/>
    <property type="match status" value="1"/>
</dbReference>
<dbReference type="Pfam" id="PF01725">
    <property type="entry name" value="Ham1p_like"/>
    <property type="match status" value="1"/>
</dbReference>
<dbReference type="SUPFAM" id="SSF52972">
    <property type="entry name" value="ITPase-like"/>
    <property type="match status" value="1"/>
</dbReference>
<accession>Q817P4</accession>
<feature type="chain" id="PRO_0000178121" description="dITP/XTP pyrophosphatase">
    <location>
        <begin position="1"/>
        <end position="205"/>
    </location>
</feature>
<feature type="active site" description="Proton acceptor" evidence="1">
    <location>
        <position position="73"/>
    </location>
</feature>
<feature type="binding site" evidence="1">
    <location>
        <begin position="11"/>
        <end position="16"/>
    </location>
    <ligand>
        <name>substrate</name>
    </ligand>
</feature>
<feature type="binding site" evidence="1">
    <location>
        <position position="44"/>
    </location>
    <ligand>
        <name>Mg(2+)</name>
        <dbReference type="ChEBI" id="CHEBI:18420"/>
    </ligand>
</feature>
<feature type="binding site" evidence="1">
    <location>
        <position position="73"/>
    </location>
    <ligand>
        <name>Mg(2+)</name>
        <dbReference type="ChEBI" id="CHEBI:18420"/>
    </ligand>
</feature>
<feature type="binding site" evidence="1">
    <location>
        <position position="74"/>
    </location>
    <ligand>
        <name>substrate</name>
    </ligand>
</feature>
<feature type="binding site" evidence="1">
    <location>
        <begin position="158"/>
        <end position="161"/>
    </location>
    <ligand>
        <name>substrate</name>
    </ligand>
</feature>
<feature type="binding site" evidence="1">
    <location>
        <position position="181"/>
    </location>
    <ligand>
        <name>substrate</name>
    </ligand>
</feature>
<feature type="binding site" evidence="1">
    <location>
        <begin position="186"/>
        <end position="187"/>
    </location>
    <ligand>
        <name>substrate</name>
    </ligand>
</feature>
<comment type="function">
    <text evidence="1">Pyrophosphatase that catalyzes the hydrolysis of nucleoside triphosphates to their monophosphate derivatives, with a high preference for the non-canonical purine nucleotides XTP (xanthosine triphosphate), dITP (deoxyinosine triphosphate) and ITP. Seems to function as a house-cleaning enzyme that removes non-canonical purine nucleotides from the nucleotide pool, thus preventing their incorporation into DNA/RNA and avoiding chromosomal lesions.</text>
</comment>
<comment type="catalytic activity">
    <reaction evidence="1">
        <text>XTP + H2O = XMP + diphosphate + H(+)</text>
        <dbReference type="Rhea" id="RHEA:28610"/>
        <dbReference type="ChEBI" id="CHEBI:15377"/>
        <dbReference type="ChEBI" id="CHEBI:15378"/>
        <dbReference type="ChEBI" id="CHEBI:33019"/>
        <dbReference type="ChEBI" id="CHEBI:57464"/>
        <dbReference type="ChEBI" id="CHEBI:61314"/>
        <dbReference type="EC" id="3.6.1.66"/>
    </reaction>
</comment>
<comment type="catalytic activity">
    <reaction evidence="1">
        <text>dITP + H2O = dIMP + diphosphate + H(+)</text>
        <dbReference type="Rhea" id="RHEA:28342"/>
        <dbReference type="ChEBI" id="CHEBI:15377"/>
        <dbReference type="ChEBI" id="CHEBI:15378"/>
        <dbReference type="ChEBI" id="CHEBI:33019"/>
        <dbReference type="ChEBI" id="CHEBI:61194"/>
        <dbReference type="ChEBI" id="CHEBI:61382"/>
        <dbReference type="EC" id="3.6.1.66"/>
    </reaction>
</comment>
<comment type="catalytic activity">
    <reaction evidence="1">
        <text>ITP + H2O = IMP + diphosphate + H(+)</text>
        <dbReference type="Rhea" id="RHEA:29399"/>
        <dbReference type="ChEBI" id="CHEBI:15377"/>
        <dbReference type="ChEBI" id="CHEBI:15378"/>
        <dbReference type="ChEBI" id="CHEBI:33019"/>
        <dbReference type="ChEBI" id="CHEBI:58053"/>
        <dbReference type="ChEBI" id="CHEBI:61402"/>
        <dbReference type="EC" id="3.6.1.66"/>
    </reaction>
</comment>
<comment type="cofactor">
    <cofactor evidence="1">
        <name>Mg(2+)</name>
        <dbReference type="ChEBI" id="CHEBI:18420"/>
    </cofactor>
    <text evidence="1">Binds 1 Mg(2+) ion per subunit.</text>
</comment>
<comment type="subunit">
    <text evidence="1">Homodimer.</text>
</comment>
<comment type="similarity">
    <text evidence="1">Belongs to the HAM1 NTPase family.</text>
</comment>
<proteinExistence type="inferred from homology"/>
<name>IXTPA_BACCR</name>
<reference key="1">
    <citation type="journal article" date="2003" name="Nature">
        <title>Genome sequence of Bacillus cereus and comparative analysis with Bacillus anthracis.</title>
        <authorList>
            <person name="Ivanova N."/>
            <person name="Sorokin A."/>
            <person name="Anderson I."/>
            <person name="Galleron N."/>
            <person name="Candelon B."/>
            <person name="Kapatral V."/>
            <person name="Bhattacharyya A."/>
            <person name="Reznik G."/>
            <person name="Mikhailova N."/>
            <person name="Lapidus A."/>
            <person name="Chu L."/>
            <person name="Mazur M."/>
            <person name="Goltsman E."/>
            <person name="Larsen N."/>
            <person name="D'Souza M."/>
            <person name="Walunas T."/>
            <person name="Grechkin Y."/>
            <person name="Pusch G."/>
            <person name="Haselkorn R."/>
            <person name="Fonstein M."/>
            <person name="Ehrlich S.D."/>
            <person name="Overbeek R."/>
            <person name="Kyrpides N.C."/>
        </authorList>
    </citation>
    <scope>NUCLEOTIDE SEQUENCE [LARGE SCALE GENOMIC DNA]</scope>
    <source>
        <strain>ATCC 14579 / DSM 31 / CCUG 7414 / JCM 2152 / NBRC 15305 / NCIMB 9373 / NCTC 2599 / NRRL B-3711</strain>
    </source>
</reference>
<organism>
    <name type="scientific">Bacillus cereus (strain ATCC 14579 / DSM 31 / CCUG 7414 / JCM 2152 / NBRC 15305 / NCIMB 9373 / NCTC 2599 / NRRL B-3711)</name>
    <dbReference type="NCBI Taxonomy" id="226900"/>
    <lineage>
        <taxon>Bacteria</taxon>
        <taxon>Bacillati</taxon>
        <taxon>Bacillota</taxon>
        <taxon>Bacilli</taxon>
        <taxon>Bacillales</taxon>
        <taxon>Bacillaceae</taxon>
        <taxon>Bacillus</taxon>
        <taxon>Bacillus cereus group</taxon>
    </lineage>
</organism>
<gene>
    <name type="ordered locus">BC_4493</name>
</gene>
<protein>
    <recommendedName>
        <fullName evidence="1">dITP/XTP pyrophosphatase</fullName>
        <ecNumber evidence="1">3.6.1.66</ecNumber>
    </recommendedName>
    <alternativeName>
        <fullName evidence="1">Non-canonical purine NTP pyrophosphatase</fullName>
    </alternativeName>
    <alternativeName>
        <fullName evidence="1">Non-standard purine NTP pyrophosphatase</fullName>
    </alternativeName>
    <alternativeName>
        <fullName evidence="1">Nucleoside-triphosphate diphosphatase</fullName>
    </alternativeName>
    <alternativeName>
        <fullName evidence="1">Nucleoside-triphosphate pyrophosphatase</fullName>
        <shortName evidence="1">NTPase</shortName>
    </alternativeName>
</protein>